<gene>
    <name evidence="1" type="primary">UQCC3</name>
</gene>
<reference key="1">
    <citation type="submission" date="2006-06" db="EMBL/GenBank/DDBJ databases">
        <authorList>
            <consortium name="NIH - Mammalian Gene Collection (MGC) project"/>
        </authorList>
    </citation>
    <scope>NUCLEOTIDE SEQUENCE [LARGE SCALE MRNA]</scope>
    <source>
        <strain>Hereford</strain>
        <tissue>Fetal pons</tissue>
    </source>
</reference>
<evidence type="ECO:0000250" key="1">
    <source>
        <dbReference type="UniProtKB" id="Q6UW78"/>
    </source>
</evidence>
<evidence type="ECO:0000250" key="2">
    <source>
        <dbReference type="UniProtKB" id="Q8K2T4"/>
    </source>
</evidence>
<evidence type="ECO:0000255" key="3"/>
<evidence type="ECO:0000305" key="4"/>
<name>UQCC3_BOVIN</name>
<keyword id="KW-0066">ATP synthesis</keyword>
<keyword id="KW-0472">Membrane</keyword>
<keyword id="KW-0496">Mitochondrion</keyword>
<keyword id="KW-0999">Mitochondrion inner membrane</keyword>
<keyword id="KW-1185">Reference proteome</keyword>
<keyword id="KW-0812">Transmembrane</keyword>
<keyword id="KW-1133">Transmembrane helix</keyword>
<proteinExistence type="inferred from homology"/>
<protein>
    <recommendedName>
        <fullName evidence="1">Ubiquinol-cytochrome-c reductase complex assembly factor 3</fullName>
    </recommendedName>
</protein>
<sequence>MTTLRKLLLVGALLGAGAGVGTALFALVTPGEERKQAMLKEMPEQYPQRRDEAARTKELLLATLQEAAATQENVAWRKNWMSGGGGGGGGGGRSA</sequence>
<dbReference type="EMBL" id="BC118350">
    <property type="protein sequence ID" value="AAI18351.1"/>
    <property type="molecule type" value="mRNA"/>
</dbReference>
<dbReference type="RefSeq" id="NP_001069182.1">
    <property type="nucleotide sequence ID" value="NM_001075714.2"/>
</dbReference>
<dbReference type="SMR" id="Q148G8"/>
<dbReference type="FunCoup" id="Q148G8">
    <property type="interactions" value="319"/>
</dbReference>
<dbReference type="STRING" id="9913.ENSBTAP00000013832"/>
<dbReference type="PaxDb" id="9913-ENSBTAP00000013832"/>
<dbReference type="GeneID" id="515452"/>
<dbReference type="KEGG" id="bta:515452"/>
<dbReference type="CTD" id="790955"/>
<dbReference type="eggNOG" id="ENOG502S9VI">
    <property type="taxonomic scope" value="Eukaryota"/>
</dbReference>
<dbReference type="HOGENOM" id="CLU_184624_0_0_1"/>
<dbReference type="InParanoid" id="Q148G8"/>
<dbReference type="TreeFam" id="TF339744"/>
<dbReference type="Proteomes" id="UP000009136">
    <property type="component" value="Unplaced"/>
</dbReference>
<dbReference type="GO" id="GO:0005829">
    <property type="term" value="C:cytosol"/>
    <property type="evidence" value="ECO:0007669"/>
    <property type="project" value="Ensembl"/>
</dbReference>
<dbReference type="GO" id="GO:0005743">
    <property type="term" value="C:mitochondrial inner membrane"/>
    <property type="evidence" value="ECO:0000250"/>
    <property type="project" value="UniProtKB"/>
</dbReference>
<dbReference type="GO" id="GO:0005654">
    <property type="term" value="C:nucleoplasm"/>
    <property type="evidence" value="ECO:0007669"/>
    <property type="project" value="Ensembl"/>
</dbReference>
<dbReference type="GO" id="GO:1901612">
    <property type="term" value="F:cardiolipin binding"/>
    <property type="evidence" value="ECO:0000250"/>
    <property type="project" value="UniProtKB"/>
</dbReference>
<dbReference type="GO" id="GO:0070300">
    <property type="term" value="F:phosphatidic acid binding"/>
    <property type="evidence" value="ECO:0000250"/>
    <property type="project" value="UniProtKB"/>
</dbReference>
<dbReference type="GO" id="GO:0006754">
    <property type="term" value="P:ATP biosynthetic process"/>
    <property type="evidence" value="ECO:0007669"/>
    <property type="project" value="UniProtKB-KW"/>
</dbReference>
<dbReference type="GO" id="GO:0042407">
    <property type="term" value="P:cristae formation"/>
    <property type="evidence" value="ECO:0000250"/>
    <property type="project" value="UniProtKB"/>
</dbReference>
<dbReference type="GO" id="GO:0006122">
    <property type="term" value="P:mitochondrial electron transport, ubiquinol to cytochrome c"/>
    <property type="evidence" value="ECO:0000250"/>
    <property type="project" value="UniProtKB"/>
</dbReference>
<dbReference type="GO" id="GO:0034551">
    <property type="term" value="P:mitochondrial respiratory chain complex III assembly"/>
    <property type="evidence" value="ECO:0000250"/>
    <property type="project" value="UniProtKB"/>
</dbReference>
<dbReference type="InterPro" id="IPR027896">
    <property type="entry name" value="UQCC3"/>
</dbReference>
<dbReference type="PANTHER" id="PTHR36465">
    <property type="entry name" value="UBIQUINOL-CYTOCHROME-C REDUCTASE COMPLEX ASSEMBLY FACTOR 3"/>
    <property type="match status" value="1"/>
</dbReference>
<dbReference type="PANTHER" id="PTHR36465:SF1">
    <property type="entry name" value="UBIQUINOL-CYTOCHROME-C REDUCTASE COMPLEX ASSEMBLY FACTOR 3"/>
    <property type="match status" value="1"/>
</dbReference>
<dbReference type="Pfam" id="PF15141">
    <property type="entry name" value="UQCC3"/>
    <property type="match status" value="1"/>
</dbReference>
<accession>Q148G8</accession>
<feature type="chain" id="PRO_0000351680" description="Ubiquinol-cytochrome-c reductase complex assembly factor 3">
    <location>
        <begin position="1"/>
        <end position="95"/>
    </location>
</feature>
<feature type="topological domain" description="Mitochondrial matrix" evidence="1">
    <location>
        <begin position="1"/>
        <end position="7"/>
    </location>
</feature>
<feature type="transmembrane region" description="Helical" evidence="3">
    <location>
        <begin position="8"/>
        <end position="28"/>
    </location>
</feature>
<feature type="topological domain" description="Mitochondrial intermembrane" evidence="1">
    <location>
        <begin position="29"/>
        <end position="95"/>
    </location>
</feature>
<feature type="region of interest" description="Mediates lipid-binding" evidence="1">
    <location>
        <begin position="23"/>
        <end position="80"/>
    </location>
</feature>
<comment type="function">
    <text evidence="1">Required for the assembly of the ubiquinol-cytochrome c reductase complex (mitochondrial respiratory chain complex III or cytochrome b-c1 complex), mediating cytochrome b recruitment and probably stabilization within the complex. Thereby, plays an important role in ATP production by mitochondria. Cardiolipin-binding protein, it may also control the cardiolipin composition of mitochondria membranes and their morphology.</text>
</comment>
<comment type="subunit">
    <text evidence="1 2">Associates with the ubiquinol-cytochrome c reductase complex (mitochondrial respiratory chain complex III(CIII) or cytochrome b-c1 complex) (By similarity). Interacts with UQCC1 (By similarity). Forms a complex, named COMC, composed of UQCC1, UQCC2; UQCC3 and UQCC4; mediates MT-CYB hemylation and association with the first nuclear-encoded complex III subunit UQCRQ (By similarity).</text>
</comment>
<comment type="subcellular location">
    <subcellularLocation>
        <location evidence="1">Mitochondrion inner membrane</location>
        <topology evidence="3">Single-pass membrane protein</topology>
    </subcellularLocation>
</comment>
<comment type="PTM">
    <text evidence="1">Probably cleaved by OMA1 under mitochondrial stress conditions.</text>
</comment>
<comment type="similarity">
    <text evidence="4">Belongs to the UQCC3 family.</text>
</comment>
<organism>
    <name type="scientific">Bos taurus</name>
    <name type="common">Bovine</name>
    <dbReference type="NCBI Taxonomy" id="9913"/>
    <lineage>
        <taxon>Eukaryota</taxon>
        <taxon>Metazoa</taxon>
        <taxon>Chordata</taxon>
        <taxon>Craniata</taxon>
        <taxon>Vertebrata</taxon>
        <taxon>Euteleostomi</taxon>
        <taxon>Mammalia</taxon>
        <taxon>Eutheria</taxon>
        <taxon>Laurasiatheria</taxon>
        <taxon>Artiodactyla</taxon>
        <taxon>Ruminantia</taxon>
        <taxon>Pecora</taxon>
        <taxon>Bovidae</taxon>
        <taxon>Bovinae</taxon>
        <taxon>Bos</taxon>
    </lineage>
</organism>